<gene>
    <name evidence="1" type="primary">leuS</name>
    <name type="ordered locus">lpp1302</name>
</gene>
<sequence length="823" mass="94105">MDNTYNPQEVEEQAQQYWHKKQSFNVTEDLNKEKFYCLSMFPYPSGTLHMGHVRNYTLGDVIARYQRALGKNVLQPIGWDAFGLPAENAAIKNKIPPAEWTRKNIAAMKEQFLRLGNAYDWKREITTCDPEYYRWEQWFFIRLFEKGLVYKKNAVVNWDPVDQTVLANEQVVDGRGWRSGALVERKEISQWFIKITSYADELLSSLDSLDEWPAQVKQMQRNWIGKSIGTEIYFNVNNYPKRLKIYTTRPDTLMGATYLAVATDHPLAKEAASNNKKVQEFLDSCQGIKIAEAELATMEKRGIDTGMTAIHPITGKELPIWVANFVLMQYGSGAVMAVPAHDQRDWEFAQKYQLPVKQVIKPIDIEHDFNQSAYTEEGILINSNQFDNLLSSKAIQVITNFLEENDAGKATINYRLRDWGVSRQRYWGTPIPMIICEQCGIVPVPDEELPVVLPENVDFTGTGSPLTQCKEFVNVTCPKCGQDANRETDTFDTFVESSWYYARFACKGQENAMLDDRAKYWTPVDQYIGGIEHAVMHLLYARFFHKLMRDEGLVNSDEPFKALLTQGMVLKDGHKMSKSLGNVVDPNHLINTYGADTARLFVMFASPPEQSLEWSDSGVEGAHRFLKRVWAFSHQHRDMLIDINDSILSGNGHVDWKEAESRLKKSRHIVHQILAQATHDYDRNQFNTVVSGCMKLFNEISDYSIETENDKFFIHSSISILLRLLAPITPHICHCLWQQLGFDKAIIDAPWPKVDKSALKTDEVDYVVQVNGKLRAQFTASTDASEEELIAAAKEHAHNFVVNHTIKKAIIVPHRQLINLVIG</sequence>
<keyword id="KW-0030">Aminoacyl-tRNA synthetase</keyword>
<keyword id="KW-0067">ATP-binding</keyword>
<keyword id="KW-0963">Cytoplasm</keyword>
<keyword id="KW-0436">Ligase</keyword>
<keyword id="KW-0547">Nucleotide-binding</keyword>
<keyword id="KW-0648">Protein biosynthesis</keyword>
<evidence type="ECO:0000255" key="1">
    <source>
        <dbReference type="HAMAP-Rule" id="MF_00049"/>
    </source>
</evidence>
<protein>
    <recommendedName>
        <fullName evidence="1">Leucine--tRNA ligase</fullName>
        <ecNumber evidence="1">6.1.1.4</ecNumber>
    </recommendedName>
    <alternativeName>
        <fullName evidence="1">Leucyl-tRNA synthetase</fullName>
        <shortName evidence="1">LeuRS</shortName>
    </alternativeName>
</protein>
<comment type="catalytic activity">
    <reaction evidence="1">
        <text>tRNA(Leu) + L-leucine + ATP = L-leucyl-tRNA(Leu) + AMP + diphosphate</text>
        <dbReference type="Rhea" id="RHEA:11688"/>
        <dbReference type="Rhea" id="RHEA-COMP:9613"/>
        <dbReference type="Rhea" id="RHEA-COMP:9622"/>
        <dbReference type="ChEBI" id="CHEBI:30616"/>
        <dbReference type="ChEBI" id="CHEBI:33019"/>
        <dbReference type="ChEBI" id="CHEBI:57427"/>
        <dbReference type="ChEBI" id="CHEBI:78442"/>
        <dbReference type="ChEBI" id="CHEBI:78494"/>
        <dbReference type="ChEBI" id="CHEBI:456215"/>
        <dbReference type="EC" id="6.1.1.4"/>
    </reaction>
</comment>
<comment type="subcellular location">
    <subcellularLocation>
        <location evidence="1">Cytoplasm</location>
    </subcellularLocation>
</comment>
<comment type="similarity">
    <text evidence="1">Belongs to the class-I aminoacyl-tRNA synthetase family.</text>
</comment>
<proteinExistence type="inferred from homology"/>
<name>SYL_LEGPA</name>
<dbReference type="EC" id="6.1.1.4" evidence="1"/>
<dbReference type="EMBL" id="CR628336">
    <property type="protein sequence ID" value="CAH12453.1"/>
    <property type="molecule type" value="Genomic_DNA"/>
</dbReference>
<dbReference type="RefSeq" id="WP_011213647.1">
    <property type="nucleotide sequence ID" value="NC_006368.1"/>
</dbReference>
<dbReference type="SMR" id="Q5X5L8"/>
<dbReference type="KEGG" id="lpp:lpp1302"/>
<dbReference type="LegioList" id="lpp1302"/>
<dbReference type="HOGENOM" id="CLU_004427_0_0_6"/>
<dbReference type="GO" id="GO:0005829">
    <property type="term" value="C:cytosol"/>
    <property type="evidence" value="ECO:0007669"/>
    <property type="project" value="TreeGrafter"/>
</dbReference>
<dbReference type="GO" id="GO:0002161">
    <property type="term" value="F:aminoacyl-tRNA deacylase activity"/>
    <property type="evidence" value="ECO:0007669"/>
    <property type="project" value="InterPro"/>
</dbReference>
<dbReference type="GO" id="GO:0005524">
    <property type="term" value="F:ATP binding"/>
    <property type="evidence" value="ECO:0007669"/>
    <property type="project" value="UniProtKB-UniRule"/>
</dbReference>
<dbReference type="GO" id="GO:0004823">
    <property type="term" value="F:leucine-tRNA ligase activity"/>
    <property type="evidence" value="ECO:0007669"/>
    <property type="project" value="UniProtKB-UniRule"/>
</dbReference>
<dbReference type="GO" id="GO:0006429">
    <property type="term" value="P:leucyl-tRNA aminoacylation"/>
    <property type="evidence" value="ECO:0007669"/>
    <property type="project" value="UniProtKB-UniRule"/>
</dbReference>
<dbReference type="CDD" id="cd07958">
    <property type="entry name" value="Anticodon_Ia_Leu_BEm"/>
    <property type="match status" value="1"/>
</dbReference>
<dbReference type="CDD" id="cd00812">
    <property type="entry name" value="LeuRS_core"/>
    <property type="match status" value="1"/>
</dbReference>
<dbReference type="FunFam" id="1.10.730.10:FF:000003">
    <property type="entry name" value="Leucine--tRNA ligase"/>
    <property type="match status" value="1"/>
</dbReference>
<dbReference type="FunFam" id="3.40.50.620:FF:000056">
    <property type="entry name" value="Leucine--tRNA ligase"/>
    <property type="match status" value="1"/>
</dbReference>
<dbReference type="FunFam" id="3.40.50.620:FF:000395">
    <property type="entry name" value="Leucine--tRNA ligase"/>
    <property type="match status" value="1"/>
</dbReference>
<dbReference type="FunFam" id="3.90.740.10:FF:000012">
    <property type="entry name" value="Leucine--tRNA ligase"/>
    <property type="match status" value="1"/>
</dbReference>
<dbReference type="Gene3D" id="3.10.20.590">
    <property type="match status" value="1"/>
</dbReference>
<dbReference type="Gene3D" id="3.40.50.620">
    <property type="entry name" value="HUPs"/>
    <property type="match status" value="2"/>
</dbReference>
<dbReference type="Gene3D" id="1.10.730.10">
    <property type="entry name" value="Isoleucyl-tRNA Synthetase, Domain 1"/>
    <property type="match status" value="1"/>
</dbReference>
<dbReference type="HAMAP" id="MF_00049_B">
    <property type="entry name" value="Leu_tRNA_synth_B"/>
    <property type="match status" value="1"/>
</dbReference>
<dbReference type="InterPro" id="IPR001412">
    <property type="entry name" value="aa-tRNA-synth_I_CS"/>
</dbReference>
<dbReference type="InterPro" id="IPR002300">
    <property type="entry name" value="aa-tRNA-synth_Ia"/>
</dbReference>
<dbReference type="InterPro" id="IPR002302">
    <property type="entry name" value="Leu-tRNA-ligase"/>
</dbReference>
<dbReference type="InterPro" id="IPR025709">
    <property type="entry name" value="Leu_tRNA-synth_edit"/>
</dbReference>
<dbReference type="InterPro" id="IPR013155">
    <property type="entry name" value="M/V/L/I-tRNA-synth_anticd-bd"/>
</dbReference>
<dbReference type="InterPro" id="IPR015413">
    <property type="entry name" value="Methionyl/Leucyl_tRNA_Synth"/>
</dbReference>
<dbReference type="InterPro" id="IPR014729">
    <property type="entry name" value="Rossmann-like_a/b/a_fold"/>
</dbReference>
<dbReference type="InterPro" id="IPR009080">
    <property type="entry name" value="tRNAsynth_Ia_anticodon-bd"/>
</dbReference>
<dbReference type="InterPro" id="IPR009008">
    <property type="entry name" value="Val/Leu/Ile-tRNA-synth_edit"/>
</dbReference>
<dbReference type="NCBIfam" id="TIGR00396">
    <property type="entry name" value="leuS_bact"/>
    <property type="match status" value="1"/>
</dbReference>
<dbReference type="PANTHER" id="PTHR43740:SF2">
    <property type="entry name" value="LEUCINE--TRNA LIGASE, MITOCHONDRIAL"/>
    <property type="match status" value="1"/>
</dbReference>
<dbReference type="PANTHER" id="PTHR43740">
    <property type="entry name" value="LEUCYL-TRNA SYNTHETASE"/>
    <property type="match status" value="1"/>
</dbReference>
<dbReference type="Pfam" id="PF08264">
    <property type="entry name" value="Anticodon_1"/>
    <property type="match status" value="1"/>
</dbReference>
<dbReference type="Pfam" id="PF00133">
    <property type="entry name" value="tRNA-synt_1"/>
    <property type="match status" value="1"/>
</dbReference>
<dbReference type="Pfam" id="PF13603">
    <property type="entry name" value="tRNA-synt_1_2"/>
    <property type="match status" value="1"/>
</dbReference>
<dbReference type="Pfam" id="PF09334">
    <property type="entry name" value="tRNA-synt_1g"/>
    <property type="match status" value="1"/>
</dbReference>
<dbReference type="PRINTS" id="PR00985">
    <property type="entry name" value="TRNASYNTHLEU"/>
</dbReference>
<dbReference type="SUPFAM" id="SSF47323">
    <property type="entry name" value="Anticodon-binding domain of a subclass of class I aminoacyl-tRNA synthetases"/>
    <property type="match status" value="1"/>
</dbReference>
<dbReference type="SUPFAM" id="SSF52374">
    <property type="entry name" value="Nucleotidylyl transferase"/>
    <property type="match status" value="1"/>
</dbReference>
<dbReference type="SUPFAM" id="SSF50677">
    <property type="entry name" value="ValRS/IleRS/LeuRS editing domain"/>
    <property type="match status" value="1"/>
</dbReference>
<dbReference type="PROSITE" id="PS00178">
    <property type="entry name" value="AA_TRNA_LIGASE_I"/>
    <property type="match status" value="1"/>
</dbReference>
<reference key="1">
    <citation type="journal article" date="2004" name="Nat. Genet.">
        <title>Evidence in the Legionella pneumophila genome for exploitation of host cell functions and high genome plasticity.</title>
        <authorList>
            <person name="Cazalet C."/>
            <person name="Rusniok C."/>
            <person name="Brueggemann H."/>
            <person name="Zidane N."/>
            <person name="Magnier A."/>
            <person name="Ma L."/>
            <person name="Tichit M."/>
            <person name="Jarraud S."/>
            <person name="Bouchier C."/>
            <person name="Vandenesch F."/>
            <person name="Kunst F."/>
            <person name="Etienne J."/>
            <person name="Glaser P."/>
            <person name="Buchrieser C."/>
        </authorList>
    </citation>
    <scope>NUCLEOTIDE SEQUENCE [LARGE SCALE GENOMIC DNA]</scope>
    <source>
        <strain>Paris</strain>
    </source>
</reference>
<feature type="chain" id="PRO_0000152031" description="Leucine--tRNA ligase">
    <location>
        <begin position="1"/>
        <end position="823"/>
    </location>
</feature>
<feature type="short sequence motif" description="'HIGH' region">
    <location>
        <begin position="42"/>
        <end position="52"/>
    </location>
</feature>
<feature type="short sequence motif" description="'KMSKS' region">
    <location>
        <begin position="575"/>
        <end position="579"/>
    </location>
</feature>
<feature type="binding site" evidence="1">
    <location>
        <position position="578"/>
    </location>
    <ligand>
        <name>ATP</name>
        <dbReference type="ChEBI" id="CHEBI:30616"/>
    </ligand>
</feature>
<organism>
    <name type="scientific">Legionella pneumophila (strain Paris)</name>
    <dbReference type="NCBI Taxonomy" id="297246"/>
    <lineage>
        <taxon>Bacteria</taxon>
        <taxon>Pseudomonadati</taxon>
        <taxon>Pseudomonadota</taxon>
        <taxon>Gammaproteobacteria</taxon>
        <taxon>Legionellales</taxon>
        <taxon>Legionellaceae</taxon>
        <taxon>Legionella</taxon>
    </lineage>
</organism>
<accession>Q5X5L8</accession>